<dbReference type="EC" id="4.1.1.48" evidence="1"/>
<dbReference type="EMBL" id="CP000661">
    <property type="protein sequence ID" value="ABP71981.1"/>
    <property type="molecule type" value="Genomic_DNA"/>
</dbReference>
<dbReference type="SMR" id="A4WX67"/>
<dbReference type="STRING" id="349102.Rsph17025_3097"/>
<dbReference type="KEGG" id="rsq:Rsph17025_3097"/>
<dbReference type="eggNOG" id="COG0134">
    <property type="taxonomic scope" value="Bacteria"/>
</dbReference>
<dbReference type="HOGENOM" id="CLU_034247_2_0_5"/>
<dbReference type="BioCyc" id="RSPH349102:G1G8M-3200-MONOMER"/>
<dbReference type="UniPathway" id="UPA00035">
    <property type="reaction ID" value="UER00043"/>
</dbReference>
<dbReference type="GO" id="GO:0004425">
    <property type="term" value="F:indole-3-glycerol-phosphate synthase activity"/>
    <property type="evidence" value="ECO:0007669"/>
    <property type="project" value="UniProtKB-UniRule"/>
</dbReference>
<dbReference type="GO" id="GO:0004640">
    <property type="term" value="F:phosphoribosylanthranilate isomerase activity"/>
    <property type="evidence" value="ECO:0007669"/>
    <property type="project" value="TreeGrafter"/>
</dbReference>
<dbReference type="GO" id="GO:0000162">
    <property type="term" value="P:L-tryptophan biosynthetic process"/>
    <property type="evidence" value="ECO:0007669"/>
    <property type="project" value="UniProtKB-UniRule"/>
</dbReference>
<dbReference type="CDD" id="cd00331">
    <property type="entry name" value="IGPS"/>
    <property type="match status" value="1"/>
</dbReference>
<dbReference type="FunFam" id="3.20.20.70:FF:000024">
    <property type="entry name" value="Indole-3-glycerol phosphate synthase"/>
    <property type="match status" value="1"/>
</dbReference>
<dbReference type="Gene3D" id="3.20.20.70">
    <property type="entry name" value="Aldolase class I"/>
    <property type="match status" value="1"/>
</dbReference>
<dbReference type="HAMAP" id="MF_00134_B">
    <property type="entry name" value="IGPS_B"/>
    <property type="match status" value="1"/>
</dbReference>
<dbReference type="InterPro" id="IPR013785">
    <property type="entry name" value="Aldolase_TIM"/>
</dbReference>
<dbReference type="InterPro" id="IPR045186">
    <property type="entry name" value="Indole-3-glycerol_P_synth"/>
</dbReference>
<dbReference type="InterPro" id="IPR013798">
    <property type="entry name" value="Indole-3-glycerol_P_synth_dom"/>
</dbReference>
<dbReference type="InterPro" id="IPR001468">
    <property type="entry name" value="Indole-3-GlycerolPSynthase_CS"/>
</dbReference>
<dbReference type="InterPro" id="IPR011060">
    <property type="entry name" value="RibuloseP-bd_barrel"/>
</dbReference>
<dbReference type="NCBIfam" id="NF001370">
    <property type="entry name" value="PRK00278.1-2"/>
    <property type="match status" value="1"/>
</dbReference>
<dbReference type="NCBIfam" id="NF001373">
    <property type="entry name" value="PRK00278.1-6"/>
    <property type="match status" value="1"/>
</dbReference>
<dbReference type="NCBIfam" id="NF001377">
    <property type="entry name" value="PRK00278.2-4"/>
    <property type="match status" value="1"/>
</dbReference>
<dbReference type="PANTHER" id="PTHR22854:SF2">
    <property type="entry name" value="INDOLE-3-GLYCEROL-PHOSPHATE SYNTHASE"/>
    <property type="match status" value="1"/>
</dbReference>
<dbReference type="PANTHER" id="PTHR22854">
    <property type="entry name" value="TRYPTOPHAN BIOSYNTHESIS PROTEIN"/>
    <property type="match status" value="1"/>
</dbReference>
<dbReference type="Pfam" id="PF00218">
    <property type="entry name" value="IGPS"/>
    <property type="match status" value="1"/>
</dbReference>
<dbReference type="SUPFAM" id="SSF51366">
    <property type="entry name" value="Ribulose-phoshate binding barrel"/>
    <property type="match status" value="1"/>
</dbReference>
<dbReference type="PROSITE" id="PS00614">
    <property type="entry name" value="IGPS"/>
    <property type="match status" value="1"/>
</dbReference>
<proteinExistence type="inferred from homology"/>
<feature type="chain" id="PRO_1000018549" description="Indole-3-glycerol phosphate synthase">
    <location>
        <begin position="1"/>
        <end position="270"/>
    </location>
</feature>
<organism>
    <name type="scientific">Cereibacter sphaeroides (strain ATCC 17025 / ATH 2.4.3)</name>
    <name type="common">Rhodobacter sphaeroides</name>
    <dbReference type="NCBI Taxonomy" id="349102"/>
    <lineage>
        <taxon>Bacteria</taxon>
        <taxon>Pseudomonadati</taxon>
        <taxon>Pseudomonadota</taxon>
        <taxon>Alphaproteobacteria</taxon>
        <taxon>Rhodobacterales</taxon>
        <taxon>Paracoccaceae</taxon>
        <taxon>Cereibacter</taxon>
    </lineage>
</organism>
<gene>
    <name evidence="1" type="primary">trpC</name>
    <name type="ordered locus">Rsph17025_3097</name>
</gene>
<keyword id="KW-0028">Amino-acid biosynthesis</keyword>
<keyword id="KW-0057">Aromatic amino acid biosynthesis</keyword>
<keyword id="KW-0210">Decarboxylase</keyword>
<keyword id="KW-0456">Lyase</keyword>
<keyword id="KW-0822">Tryptophan biosynthesis</keyword>
<name>TRPC_CERS5</name>
<comment type="catalytic activity">
    <reaction evidence="1">
        <text>1-(2-carboxyphenylamino)-1-deoxy-D-ribulose 5-phosphate + H(+) = (1S,2R)-1-C-(indol-3-yl)glycerol 3-phosphate + CO2 + H2O</text>
        <dbReference type="Rhea" id="RHEA:23476"/>
        <dbReference type="ChEBI" id="CHEBI:15377"/>
        <dbReference type="ChEBI" id="CHEBI:15378"/>
        <dbReference type="ChEBI" id="CHEBI:16526"/>
        <dbReference type="ChEBI" id="CHEBI:58613"/>
        <dbReference type="ChEBI" id="CHEBI:58866"/>
        <dbReference type="EC" id="4.1.1.48"/>
    </reaction>
</comment>
<comment type="pathway">
    <text evidence="1">Amino-acid biosynthesis; L-tryptophan biosynthesis; L-tryptophan from chorismate: step 4/5.</text>
</comment>
<comment type="similarity">
    <text evidence="1">Belongs to the TrpC family.</text>
</comment>
<protein>
    <recommendedName>
        <fullName evidence="1">Indole-3-glycerol phosphate synthase</fullName>
        <shortName evidence="1">IGPS</shortName>
        <ecNumber evidence="1">4.1.1.48</ecNumber>
    </recommendedName>
</protein>
<evidence type="ECO:0000255" key="1">
    <source>
        <dbReference type="HAMAP-Rule" id="MF_00134"/>
    </source>
</evidence>
<reference key="1">
    <citation type="submission" date="2007-04" db="EMBL/GenBank/DDBJ databases">
        <title>Complete sequence of chromosome of Rhodobacter sphaeroides ATCC 17025.</title>
        <authorList>
            <consortium name="US DOE Joint Genome Institute"/>
            <person name="Copeland A."/>
            <person name="Lucas S."/>
            <person name="Lapidus A."/>
            <person name="Barry K."/>
            <person name="Detter J.C."/>
            <person name="Glavina del Rio T."/>
            <person name="Hammon N."/>
            <person name="Israni S."/>
            <person name="Dalin E."/>
            <person name="Tice H."/>
            <person name="Pitluck S."/>
            <person name="Chertkov O."/>
            <person name="Brettin T."/>
            <person name="Bruce D."/>
            <person name="Han C."/>
            <person name="Schmutz J."/>
            <person name="Larimer F."/>
            <person name="Land M."/>
            <person name="Hauser L."/>
            <person name="Kyrpides N."/>
            <person name="Kim E."/>
            <person name="Richardson P."/>
            <person name="Mackenzie C."/>
            <person name="Choudhary M."/>
            <person name="Donohue T.J."/>
            <person name="Kaplan S."/>
        </authorList>
    </citation>
    <scope>NUCLEOTIDE SEQUENCE [LARGE SCALE GENOMIC DNA]</scope>
    <source>
        <strain>ATCC 17025 / ATH 2.4.3</strain>
    </source>
</reference>
<accession>A4WX67</accession>
<sequence>MSTILDRIKAYKLEEIEARKAERPLVAVEDAARAAPAPRGFARALSAAAATGYGLIAEIKKASPSKGLIREDFDVPALARAYEAGGATCLSVLTDGPSFQGADEFLRQAHDAVKLPCLRKDFIYDTYQVAEARALGADCILIIMASVSDSQALELEAAASQWGMDVLVEVHSREELARAEHLKSRLIGINNRNLDTFEVSLDVTRDLARRVPEDRLIVSESGLYTPDDLADLARYGARCFLIGESLMRQQDVEAATRAILAAPLTSQGGI</sequence>